<name>UVRA_CHLTR</name>
<gene>
    <name type="primary">uvrA</name>
    <name type="ordered locus">CT_333</name>
</gene>
<protein>
    <recommendedName>
        <fullName>UvrABC system protein A</fullName>
        <shortName>UvrA protein</shortName>
    </recommendedName>
    <alternativeName>
        <fullName>Excinuclease ABC subunit A</fullName>
    </alternativeName>
</protein>
<proteinExistence type="inferred from homology"/>
<accession>O84337</accession>
<feature type="chain" id="PRO_0000093044" description="UvrABC system protein A">
    <location>
        <begin position="1"/>
        <end position="1786"/>
    </location>
</feature>
<feature type="domain" description="ABC transporter 1" evidence="2">
    <location>
        <begin position="314"/>
        <end position="580"/>
    </location>
</feature>
<feature type="domain" description="ABC transporter 2" evidence="2">
    <location>
        <begin position="590"/>
        <end position="913"/>
    </location>
</feature>
<feature type="zinc finger region" description="C4-type">
    <location>
        <begin position="719"/>
        <end position="742"/>
    </location>
</feature>
<feature type="zinc finger region" description="C4-type">
    <location>
        <begin position="1602"/>
        <end position="1628"/>
    </location>
</feature>
<feature type="binding site" evidence="2">
    <location>
        <begin position="32"/>
        <end position="39"/>
    </location>
    <ligand>
        <name>ATP</name>
        <dbReference type="ChEBI" id="CHEBI:30616"/>
    </ligand>
</feature>
<feature type="binding site" evidence="2">
    <location>
        <begin position="410"/>
        <end position="417"/>
    </location>
    <ligand>
        <name>ATP</name>
        <dbReference type="ChEBI" id="CHEBI:30616"/>
        <label>1</label>
    </ligand>
</feature>
<feature type="binding site" evidence="2">
    <location>
        <begin position="625"/>
        <end position="632"/>
    </location>
    <ligand>
        <name>ATP</name>
        <dbReference type="ChEBI" id="CHEBI:30616"/>
        <label>2</label>
    </ligand>
</feature>
<feature type="binding site" evidence="2">
    <location>
        <begin position="964"/>
        <end position="971"/>
    </location>
    <ligand>
        <name>ATP</name>
        <dbReference type="ChEBI" id="CHEBI:30616"/>
    </ligand>
</feature>
<feature type="binding site" evidence="2">
    <location>
        <begin position="1516"/>
        <end position="1523"/>
    </location>
    <ligand>
        <name>ATP</name>
        <dbReference type="ChEBI" id="CHEBI:30616"/>
    </ligand>
</feature>
<organism>
    <name type="scientific">Chlamydia trachomatis serovar D (strain ATCC VR-885 / DSM 19411 / UW-3/Cx)</name>
    <dbReference type="NCBI Taxonomy" id="272561"/>
    <lineage>
        <taxon>Bacteria</taxon>
        <taxon>Pseudomonadati</taxon>
        <taxon>Chlamydiota</taxon>
        <taxon>Chlamydiia</taxon>
        <taxon>Chlamydiales</taxon>
        <taxon>Chlamydiaceae</taxon>
        <taxon>Chlamydia/Chlamydophila group</taxon>
        <taxon>Chlamydia</taxon>
    </lineage>
</organism>
<reference key="1">
    <citation type="journal article" date="1998" name="Science">
        <title>Genome sequence of an obligate intracellular pathogen of humans: Chlamydia trachomatis.</title>
        <authorList>
            <person name="Stephens R.S."/>
            <person name="Kalman S."/>
            <person name="Lammel C.J."/>
            <person name="Fan J."/>
            <person name="Marathe R."/>
            <person name="Aravind L."/>
            <person name="Mitchell W.P."/>
            <person name="Olinger L."/>
            <person name="Tatusov R.L."/>
            <person name="Zhao Q."/>
            <person name="Koonin E.V."/>
            <person name="Davis R.W."/>
        </authorList>
    </citation>
    <scope>NUCLEOTIDE SEQUENCE [LARGE SCALE GENOMIC DNA]</scope>
    <source>
        <strain>ATCC VR-885 / DSM 19411 / UW-3/Cx</strain>
    </source>
</reference>
<keyword id="KW-0067">ATP-binding</keyword>
<keyword id="KW-0963">Cytoplasm</keyword>
<keyword id="KW-0227">DNA damage</keyword>
<keyword id="KW-0228">DNA excision</keyword>
<keyword id="KW-0234">DNA repair</keyword>
<keyword id="KW-0238">DNA-binding</keyword>
<keyword id="KW-0267">Excision nuclease</keyword>
<keyword id="KW-0479">Metal-binding</keyword>
<keyword id="KW-0547">Nucleotide-binding</keyword>
<keyword id="KW-1185">Reference proteome</keyword>
<keyword id="KW-0677">Repeat</keyword>
<keyword id="KW-0742">SOS response</keyword>
<keyword id="KW-0862">Zinc</keyword>
<keyword id="KW-0863">Zinc-finger</keyword>
<evidence type="ECO:0000250" key="1"/>
<evidence type="ECO:0000255" key="2">
    <source>
        <dbReference type="PROSITE-ProRule" id="PRU00434"/>
    </source>
</evidence>
<evidence type="ECO:0000305" key="3"/>
<dbReference type="EMBL" id="AE001273">
    <property type="protein sequence ID" value="AAC67928.1"/>
    <property type="molecule type" value="Genomic_DNA"/>
</dbReference>
<dbReference type="PIR" id="H71527">
    <property type="entry name" value="H71527"/>
</dbReference>
<dbReference type="RefSeq" id="NP_219840.1">
    <property type="nucleotide sequence ID" value="NC_000117.1"/>
</dbReference>
<dbReference type="RefSeq" id="WP_010725161.1">
    <property type="nucleotide sequence ID" value="NC_000117.1"/>
</dbReference>
<dbReference type="SMR" id="O84337"/>
<dbReference type="FunCoup" id="O84337">
    <property type="interactions" value="177"/>
</dbReference>
<dbReference type="STRING" id="272561.CT_333"/>
<dbReference type="EnsemblBacteria" id="AAC67928">
    <property type="protein sequence ID" value="AAC67928"/>
    <property type="gene ID" value="CT_333"/>
</dbReference>
<dbReference type="GeneID" id="884785"/>
<dbReference type="KEGG" id="ctr:CT_333"/>
<dbReference type="PATRIC" id="fig|272561.5.peg.359"/>
<dbReference type="HOGENOM" id="CLU_001370_3_1_0"/>
<dbReference type="InParanoid" id="O84337"/>
<dbReference type="OrthoDB" id="9809851at2"/>
<dbReference type="Proteomes" id="UP000000431">
    <property type="component" value="Chromosome"/>
</dbReference>
<dbReference type="GO" id="GO:0005737">
    <property type="term" value="C:cytoplasm"/>
    <property type="evidence" value="ECO:0007669"/>
    <property type="project" value="UniProtKB-SubCell"/>
</dbReference>
<dbReference type="GO" id="GO:0009380">
    <property type="term" value="C:excinuclease repair complex"/>
    <property type="evidence" value="ECO:0007669"/>
    <property type="project" value="InterPro"/>
</dbReference>
<dbReference type="GO" id="GO:0005524">
    <property type="term" value="F:ATP binding"/>
    <property type="evidence" value="ECO:0007669"/>
    <property type="project" value="UniProtKB-KW"/>
</dbReference>
<dbReference type="GO" id="GO:0016887">
    <property type="term" value="F:ATP hydrolysis activity"/>
    <property type="evidence" value="ECO:0007669"/>
    <property type="project" value="InterPro"/>
</dbReference>
<dbReference type="GO" id="GO:0003677">
    <property type="term" value="F:DNA binding"/>
    <property type="evidence" value="ECO:0007669"/>
    <property type="project" value="UniProtKB-KW"/>
</dbReference>
<dbReference type="GO" id="GO:0004518">
    <property type="term" value="F:nuclease activity"/>
    <property type="evidence" value="ECO:0007669"/>
    <property type="project" value="UniProtKB-KW"/>
</dbReference>
<dbReference type="GO" id="GO:0008270">
    <property type="term" value="F:zinc ion binding"/>
    <property type="evidence" value="ECO:0007669"/>
    <property type="project" value="UniProtKB-KW"/>
</dbReference>
<dbReference type="GO" id="GO:0006289">
    <property type="term" value="P:nucleotide-excision repair"/>
    <property type="evidence" value="ECO:0007669"/>
    <property type="project" value="InterPro"/>
</dbReference>
<dbReference type="GO" id="GO:0009432">
    <property type="term" value="P:SOS response"/>
    <property type="evidence" value="ECO:0007669"/>
    <property type="project" value="UniProtKB-KW"/>
</dbReference>
<dbReference type="Gene3D" id="1.10.8.280">
    <property type="entry name" value="ABC transporter ATPase domain-like"/>
    <property type="match status" value="2"/>
</dbReference>
<dbReference type="Gene3D" id="1.20.1580.10">
    <property type="entry name" value="ABC transporter ATPase like domain"/>
    <property type="match status" value="5"/>
</dbReference>
<dbReference type="Gene3D" id="3.30.1490.20">
    <property type="entry name" value="ATP-grasp fold, A domain"/>
    <property type="match status" value="2"/>
</dbReference>
<dbReference type="Gene3D" id="3.40.50.300">
    <property type="entry name" value="P-loop containing nucleotide triphosphate hydrolases"/>
    <property type="match status" value="5"/>
</dbReference>
<dbReference type="InterPro" id="IPR003439">
    <property type="entry name" value="ABC_transporter-like_ATP-bd"/>
</dbReference>
<dbReference type="InterPro" id="IPR013815">
    <property type="entry name" value="ATP_grasp_subdomain_1"/>
</dbReference>
<dbReference type="InterPro" id="IPR027417">
    <property type="entry name" value="P-loop_NTPase"/>
</dbReference>
<dbReference type="InterPro" id="IPR004602">
    <property type="entry name" value="UvrA"/>
</dbReference>
<dbReference type="InterPro" id="IPR041552">
    <property type="entry name" value="UvrA_DNA-bd"/>
</dbReference>
<dbReference type="InterPro" id="IPR041102">
    <property type="entry name" value="UvrA_inter"/>
</dbReference>
<dbReference type="NCBIfam" id="NF001885">
    <property type="entry name" value="PRK00635.1"/>
    <property type="match status" value="1"/>
</dbReference>
<dbReference type="NCBIfam" id="TIGR00630">
    <property type="entry name" value="uvra"/>
    <property type="match status" value="1"/>
</dbReference>
<dbReference type="PANTHER" id="PTHR43152">
    <property type="entry name" value="UVRABC SYSTEM PROTEIN A"/>
    <property type="match status" value="1"/>
</dbReference>
<dbReference type="PANTHER" id="PTHR43152:SF3">
    <property type="entry name" value="UVRABC SYSTEM PROTEIN A"/>
    <property type="match status" value="1"/>
</dbReference>
<dbReference type="Pfam" id="PF17755">
    <property type="entry name" value="UvrA_DNA-bind"/>
    <property type="match status" value="1"/>
</dbReference>
<dbReference type="Pfam" id="PF17760">
    <property type="entry name" value="UvrA_inter"/>
    <property type="match status" value="1"/>
</dbReference>
<dbReference type="SUPFAM" id="SSF52540">
    <property type="entry name" value="P-loop containing nucleoside triphosphate hydrolases"/>
    <property type="match status" value="4"/>
</dbReference>
<dbReference type="PROSITE" id="PS50893">
    <property type="entry name" value="ABC_TRANSPORTER_2"/>
    <property type="match status" value="2"/>
</dbReference>
<sequence length="1786" mass="196949">MSSIVRLSGITVRNLKNITVEFCPREIVLFTGVSGSGKSSLAFNTIYAAGRKRYLATLPSFFATKLDSLPDPSVKKIEGLSPTVAVKQNFFEQHIHATVGSTTEINSYLALLFSLEGQAYDPVTLHPLTLYSKEKILSEIAAIPDGTQLTLLAPLPARDVLTVRECLRQGFTKVLIDEEVVPIHKFLTTGIPVPGQLIVDTLIKNTSNTPRLKVSLFTTLDIGHGECSLHFDNQKRVFSTQATLPETQQTYAPLSPDLFSSHSHKDRCPQCQGSGIFISIDDPCIIQQTLSIEDNCCPFAGNCSTFLYRTIYQSLADSLGFSLSTPWQNLSPEIQHIFLYGKEGLSIPVKLFDGTLGKKTQTHKQWKGVLNEIGEKIRFSNKPARYLPKGTSYTVCPRCNKTGLSDYANATRWHGKSFADFQQMSLQELFIFLNQLPEKELAIEEVIQGFKSRLTILIDLGLPYLSPERAIDTLSGGERERTALAKHLGAELIGVMYILDEPSIGLHPQDTHKLMNVIRRLRDQGNTVLLVEHDEQMISLADRVIDIGPGAGIFGGEVVFNGSPREFLAKSDSLTAQYLRQEQHISVPAKRTNSLGTITLSKANKHNLKDLTVSIPLGQMTVVTGVSGSGKSSLINDTLVPCVEEFIEQGFCSTLSIQGALSRLVHINRDLPGRSQRSIPLTYIKAFDEVRQLFAEQPRCKTLGLTKSHFSFNTPLGACAECGGLGSITTTDNRDSITCPSCLGKRFLPQVLEVRYKNKTIADILEMTAYEAKNFFLDEPSIHQKIETLCTLGLQYLPLGRPLYSLSGGEIQRLKLAYELLAPVKHPTLYVLDEPTTGLHTHDVKQLIYVVQSLIHQGHSVIIIEHNMHVVKVADYILELGPEGGNKGGYLIASCSPEELIHKHTPTAIALRPFLSSPQELPYLPDPSPKPPVPAAITIANAHQHNLKHIDLSIPRYALTAVTGPSASGKHSLVFDILHAAGNIAYAELFPPYIRQALIKKTPLPAVDKVTGLSPVIAIEKTSASRNSNHSVASALEISEMLESLFTRIGHPYSPISGDTLRTISPETIAEELLTHYTKGYVTITVPFPKEEEFFSYTQEMLQEGFLKLYANEQFYDLDGPFPTSLENPALVIHHVKILEKNLPSLLASLTLAFSKASSVCLHIEYAGTSLSKTYRQGLQDASGNLFPNIETPSILNHESYLCPLCHGKGFLSTCSILPHKKRFAQHTPISLFTSLFPNQDPSPIYPLLNELGIPSIALFQEIDILSFESLCLGTQQHLGLNALCTKAMLMESEEDFPPDLISKTPCNQCQGLGVYTYKHCTRIHSISLSEIYQSNVAFLKKLLLSVEEEPSLVQDILSRLDLLDRVGLGYVILGQEQQSLSDGEHYRLLLAKAFSSGLTDVIYLLEDPLAGIHPEDAPCLLAVIKKLVTNHNTVIVTDREGSLAEHADYLLHLGPEPGPNGGYLLSTSALKQSQPVLCNTRSSEETPQLSVSVSTSTIQIENLAFPLQRLSTISGVSGSGKTTLLNSIYEHGCAILEKDPSVFSEIIFLDSYPQIASSRSDISTYFDIAPSLRNFYASLTQAKALNISVSMFSPNTKQGQCSDCWGLGYQWIDRAFYAMEKRPCPTCGGFRVQPLIQEVVYEGKHFGQLLQASLNEVAETFSFLKKIQKPLHTLITNDLGYLSLGQNMASLSLSEKIAIKLTKHLFLPPKHPTLFLLDEIATSLDNQQQSALLVQLNTLVSLGHTVVIIENHPAFSQQADFWIQMGRKTDNHILFAGPNPNLSFT</sequence>
<comment type="function">
    <text evidence="1">The UvrABC repair system catalyzes the recognition and processing of DNA lesions. UvrA is an ATPase and a DNA-binding protein. A damage recognition complex composed of 2 UvrA and 2 UvrB subunits scans DNA for abnormalities. When the presence of a lesion has been verified by UvrB, the UvrA molecules dissociate (By similarity).</text>
</comment>
<comment type="subunit">
    <text evidence="1">Forms a heterotetramer with UvrB during the search for lesions.</text>
</comment>
<comment type="subcellular location">
    <subcellularLocation>
        <location evidence="1">Cytoplasm</location>
    </subcellularLocation>
</comment>
<comment type="similarity">
    <text evidence="3">Belongs to the ABC transporter superfamily. UvrA family.</text>
</comment>